<evidence type="ECO:0000255" key="1">
    <source>
        <dbReference type="HAMAP-Rule" id="MF_01139"/>
    </source>
</evidence>
<protein>
    <recommendedName>
        <fullName evidence="1">Isoprenyl transferase</fullName>
        <ecNumber evidence="1">2.5.1.-</ecNumber>
    </recommendedName>
</protein>
<name>ISPT_RICPR</name>
<proteinExistence type="inferred from homology"/>
<feature type="chain" id="PRO_0000123663" description="Isoprenyl transferase">
    <location>
        <begin position="1"/>
        <end position="226"/>
    </location>
</feature>
<feature type="active site" evidence="1">
    <location>
        <position position="12"/>
    </location>
</feature>
<feature type="active site" description="Proton acceptor" evidence="1">
    <location>
        <position position="60"/>
    </location>
</feature>
<feature type="binding site" evidence="1">
    <location>
        <position position="12"/>
    </location>
    <ligand>
        <name>Mg(2+)</name>
        <dbReference type="ChEBI" id="CHEBI:18420"/>
    </ligand>
</feature>
<feature type="binding site" evidence="1">
    <location>
        <begin position="13"/>
        <end position="16"/>
    </location>
    <ligand>
        <name>substrate</name>
    </ligand>
</feature>
<feature type="binding site" evidence="1">
    <location>
        <position position="17"/>
    </location>
    <ligand>
        <name>substrate</name>
    </ligand>
</feature>
<feature type="binding site" evidence="1">
    <location>
        <position position="25"/>
    </location>
    <ligand>
        <name>substrate</name>
    </ligand>
</feature>
<feature type="binding site" evidence="1">
    <location>
        <position position="29"/>
    </location>
    <ligand>
        <name>substrate</name>
    </ligand>
</feature>
<feature type="binding site" evidence="1">
    <location>
        <begin position="57"/>
        <end position="59"/>
    </location>
    <ligand>
        <name>substrate</name>
    </ligand>
</feature>
<feature type="binding site" evidence="1">
    <location>
        <position position="61"/>
    </location>
    <ligand>
        <name>substrate</name>
    </ligand>
</feature>
<feature type="binding site" evidence="1">
    <location>
        <position position="63"/>
    </location>
    <ligand>
        <name>substrate</name>
    </ligand>
</feature>
<feature type="binding site" evidence="1">
    <location>
        <position position="174"/>
    </location>
    <ligand>
        <name>substrate</name>
    </ligand>
</feature>
<feature type="binding site" evidence="1">
    <location>
        <begin position="180"/>
        <end position="182"/>
    </location>
    <ligand>
        <name>substrate</name>
    </ligand>
</feature>
<feature type="binding site" evidence="1">
    <location>
        <position position="193"/>
    </location>
    <ligand>
        <name>Mg(2+)</name>
        <dbReference type="ChEBI" id="CHEBI:18420"/>
    </ligand>
</feature>
<accession>Q9ZDA7</accession>
<gene>
    <name evidence="1" type="primary">uppS</name>
    <name type="ordered locus">RP425</name>
</gene>
<dbReference type="EC" id="2.5.1.-" evidence="1"/>
<dbReference type="EMBL" id="AJ235271">
    <property type="protein sequence ID" value="CAA14882.1"/>
    <property type="molecule type" value="Genomic_DNA"/>
</dbReference>
<dbReference type="PIR" id="H71700">
    <property type="entry name" value="H71700"/>
</dbReference>
<dbReference type="RefSeq" id="NP_220806.1">
    <property type="nucleotide sequence ID" value="NC_000963.1"/>
</dbReference>
<dbReference type="RefSeq" id="WP_004597627.1">
    <property type="nucleotide sequence ID" value="NC_000963.1"/>
</dbReference>
<dbReference type="SMR" id="Q9ZDA7"/>
<dbReference type="STRING" id="272947.gene:17555505"/>
<dbReference type="EnsemblBacteria" id="CAA14882">
    <property type="protein sequence ID" value="CAA14882"/>
    <property type="gene ID" value="CAA14882"/>
</dbReference>
<dbReference type="GeneID" id="57569550"/>
<dbReference type="KEGG" id="rpr:RP425"/>
<dbReference type="PATRIC" id="fig|272947.5.peg.438"/>
<dbReference type="eggNOG" id="COG0020">
    <property type="taxonomic scope" value="Bacteria"/>
</dbReference>
<dbReference type="HOGENOM" id="CLU_038505_1_1_5"/>
<dbReference type="OrthoDB" id="4191603at2"/>
<dbReference type="Proteomes" id="UP000002480">
    <property type="component" value="Chromosome"/>
</dbReference>
<dbReference type="GO" id="GO:0045547">
    <property type="term" value="F:ditrans,polycis-polyprenyl diphosphate synthase [(2E,6E)-farnesyl diphosphate specific] activity"/>
    <property type="evidence" value="ECO:0007669"/>
    <property type="project" value="TreeGrafter"/>
</dbReference>
<dbReference type="GO" id="GO:0000287">
    <property type="term" value="F:magnesium ion binding"/>
    <property type="evidence" value="ECO:0007669"/>
    <property type="project" value="UniProtKB-UniRule"/>
</dbReference>
<dbReference type="GO" id="GO:0016094">
    <property type="term" value="P:polyprenol biosynthetic process"/>
    <property type="evidence" value="ECO:0007669"/>
    <property type="project" value="TreeGrafter"/>
</dbReference>
<dbReference type="CDD" id="cd00475">
    <property type="entry name" value="Cis_IPPS"/>
    <property type="match status" value="1"/>
</dbReference>
<dbReference type="Gene3D" id="3.40.1180.10">
    <property type="entry name" value="Decaprenyl diphosphate synthase-like"/>
    <property type="match status" value="1"/>
</dbReference>
<dbReference type="HAMAP" id="MF_01139">
    <property type="entry name" value="ISPT"/>
    <property type="match status" value="1"/>
</dbReference>
<dbReference type="InterPro" id="IPR001441">
    <property type="entry name" value="UPP_synth-like"/>
</dbReference>
<dbReference type="InterPro" id="IPR018520">
    <property type="entry name" value="UPP_synth-like_CS"/>
</dbReference>
<dbReference type="InterPro" id="IPR036424">
    <property type="entry name" value="UPP_synth-like_sf"/>
</dbReference>
<dbReference type="NCBIfam" id="TIGR00055">
    <property type="entry name" value="uppS"/>
    <property type="match status" value="1"/>
</dbReference>
<dbReference type="PANTHER" id="PTHR10291:SF0">
    <property type="entry name" value="DEHYDRODOLICHYL DIPHOSPHATE SYNTHASE 2"/>
    <property type="match status" value="1"/>
</dbReference>
<dbReference type="PANTHER" id="PTHR10291">
    <property type="entry name" value="DEHYDRODOLICHYL DIPHOSPHATE SYNTHASE FAMILY MEMBER"/>
    <property type="match status" value="1"/>
</dbReference>
<dbReference type="Pfam" id="PF01255">
    <property type="entry name" value="Prenyltransf"/>
    <property type="match status" value="1"/>
</dbReference>
<dbReference type="SUPFAM" id="SSF64005">
    <property type="entry name" value="Undecaprenyl diphosphate synthase"/>
    <property type="match status" value="1"/>
</dbReference>
<dbReference type="PROSITE" id="PS01066">
    <property type="entry name" value="UPP_SYNTHASE"/>
    <property type="match status" value="1"/>
</dbReference>
<comment type="function">
    <text evidence="1">Catalyzes the condensation of isopentenyl diphosphate (IPP) with allylic pyrophosphates generating different type of terpenoids.</text>
</comment>
<comment type="cofactor">
    <cofactor evidence="1">
        <name>Mg(2+)</name>
        <dbReference type="ChEBI" id="CHEBI:18420"/>
    </cofactor>
    <text evidence="1">Binds 2 magnesium ions per subunit.</text>
</comment>
<comment type="subunit">
    <text evidence="1">Homodimer.</text>
</comment>
<comment type="similarity">
    <text evidence="1">Belongs to the UPP synthase family.</text>
</comment>
<organism>
    <name type="scientific">Rickettsia prowazekii (strain Madrid E)</name>
    <dbReference type="NCBI Taxonomy" id="272947"/>
    <lineage>
        <taxon>Bacteria</taxon>
        <taxon>Pseudomonadati</taxon>
        <taxon>Pseudomonadota</taxon>
        <taxon>Alphaproteobacteria</taxon>
        <taxon>Rickettsiales</taxon>
        <taxon>Rickettsiaceae</taxon>
        <taxon>Rickettsieae</taxon>
        <taxon>Rickettsia</taxon>
        <taxon>typhus group</taxon>
    </lineage>
</organism>
<reference key="1">
    <citation type="journal article" date="1998" name="Nature">
        <title>The genome sequence of Rickettsia prowazekii and the origin of mitochondria.</title>
        <authorList>
            <person name="Andersson S.G.E."/>
            <person name="Zomorodipour A."/>
            <person name="Andersson J.O."/>
            <person name="Sicheritz-Ponten T."/>
            <person name="Alsmark U.C.M."/>
            <person name="Podowski R.M."/>
            <person name="Naeslund A.K."/>
            <person name="Eriksson A.-S."/>
            <person name="Winkler H.H."/>
            <person name="Kurland C.G."/>
        </authorList>
    </citation>
    <scope>NUCLEOTIDE SEQUENCE [LARGE SCALE GENOMIC DNA]</scope>
    <source>
        <strain>Madrid E</strain>
    </source>
</reference>
<keyword id="KW-0460">Magnesium</keyword>
<keyword id="KW-0479">Metal-binding</keyword>
<keyword id="KW-1185">Reference proteome</keyword>
<keyword id="KW-0808">Transferase</keyword>
<sequence length="226" mass="26286">MTTIKHLAIIMDGNARWADRHNLTKSEGHKAGADKIRELLPEFINLNIPYITLYTFSFENWQRSSSEVDFLIKLLSIYLKNELDSLHENGVKIKVIGRLNLLRSSLQKQINNAIELTKNNNKIKLCIAFSYGSRQEIVDACTKIIAHGKKQVSEYDIQHALYDPEMPDVDLLIRSGGVYRISNFLLWQAAYAELYFSQKYWPDFNKDDIHEAINDYSKRKRTFGKR</sequence>